<dbReference type="EMBL" id="AAFI02000104">
    <property type="protein sequence ID" value="EAL63528.1"/>
    <property type="molecule type" value="Genomic_DNA"/>
</dbReference>
<dbReference type="RefSeq" id="XP_637037.1">
    <property type="nucleotide sequence ID" value="XM_631945.1"/>
</dbReference>
<dbReference type="SMR" id="Q54JW5"/>
<dbReference type="FunCoup" id="Q54JW5">
    <property type="interactions" value="7"/>
</dbReference>
<dbReference type="TCDB" id="2.A.123.1.14">
    <property type="family name" value="the sweet, pq-loop, saliva, mtn3 (sweet) family"/>
</dbReference>
<dbReference type="PaxDb" id="44689-DDB0187619"/>
<dbReference type="EnsemblProtists" id="EAL63528">
    <property type="protein sequence ID" value="EAL63528"/>
    <property type="gene ID" value="DDB_G0287763"/>
</dbReference>
<dbReference type="GeneID" id="8626291"/>
<dbReference type="KEGG" id="ddi:DDB_G0287763"/>
<dbReference type="dictyBase" id="DDB_G0287763"/>
<dbReference type="VEuPathDB" id="AmoebaDB:DDB_G0287763"/>
<dbReference type="eggNOG" id="KOG1623">
    <property type="taxonomic scope" value="Eukaryota"/>
</dbReference>
<dbReference type="HOGENOM" id="CLU_048643_1_0_1"/>
<dbReference type="InParanoid" id="Q54JW5"/>
<dbReference type="OMA" id="MIFCNCY"/>
<dbReference type="PhylomeDB" id="Q54JW5"/>
<dbReference type="Reactome" id="R-DDI-189200">
    <property type="pathway name" value="Cellular hexose transport"/>
</dbReference>
<dbReference type="PRO" id="PR:Q54JW5"/>
<dbReference type="Proteomes" id="UP000002195">
    <property type="component" value="Chromosome 5"/>
</dbReference>
<dbReference type="GO" id="GO:0000139">
    <property type="term" value="C:Golgi membrane"/>
    <property type="evidence" value="ECO:0007669"/>
    <property type="project" value="UniProtKB-SubCell"/>
</dbReference>
<dbReference type="GO" id="GO:0016020">
    <property type="term" value="C:membrane"/>
    <property type="evidence" value="ECO:0000318"/>
    <property type="project" value="GO_Central"/>
</dbReference>
<dbReference type="GO" id="GO:0005886">
    <property type="term" value="C:plasma membrane"/>
    <property type="evidence" value="ECO:0007669"/>
    <property type="project" value="UniProtKB-SubCell"/>
</dbReference>
<dbReference type="GO" id="GO:0051119">
    <property type="term" value="F:sugar transmembrane transporter activity"/>
    <property type="evidence" value="ECO:0000250"/>
    <property type="project" value="UniProtKB"/>
</dbReference>
<dbReference type="GO" id="GO:0008643">
    <property type="term" value="P:carbohydrate transport"/>
    <property type="evidence" value="ECO:0000318"/>
    <property type="project" value="GO_Central"/>
</dbReference>
<dbReference type="FunFam" id="1.20.1280.290:FF:000004">
    <property type="entry name" value="Sugar transporter SWEET"/>
    <property type="match status" value="1"/>
</dbReference>
<dbReference type="Gene3D" id="1.20.1280.290">
    <property type="match status" value="2"/>
</dbReference>
<dbReference type="InterPro" id="IPR047664">
    <property type="entry name" value="SWEET"/>
</dbReference>
<dbReference type="InterPro" id="IPR004316">
    <property type="entry name" value="SWEET_rpt"/>
</dbReference>
<dbReference type="PANTHER" id="PTHR10791">
    <property type="entry name" value="RAG1-ACTIVATING PROTEIN 1"/>
    <property type="match status" value="1"/>
</dbReference>
<dbReference type="PANTHER" id="PTHR10791:SF30">
    <property type="entry name" value="SUGAR TRANSPORTER SWEET1"/>
    <property type="match status" value="1"/>
</dbReference>
<dbReference type="Pfam" id="PF03083">
    <property type="entry name" value="MtN3_slv"/>
    <property type="match status" value="2"/>
</dbReference>
<sequence>MEDEKNENLMTFIQFCATFITITLFIMPLKTIRLIIEKKNVGTVAGLQFISSVLNCFLWISYALLTSNTTMLFVNSIGMMFSIYYVFNYWKNINQVRASRDYLKKVMIACVLAITIISISYYNTVDDLDTRISRLGFLSSVVCVLMFASPLEKMAIVIQSKNSEGMIINVAILSLLCGLSWTIFGLLLNDIYIYLPNILASILSFVQLTLIKLYPPQILL</sequence>
<reference key="1">
    <citation type="journal article" date="2005" name="Nature">
        <title>The genome of the social amoeba Dictyostelium discoideum.</title>
        <authorList>
            <person name="Eichinger L."/>
            <person name="Pachebat J.A."/>
            <person name="Gloeckner G."/>
            <person name="Rajandream M.A."/>
            <person name="Sucgang R."/>
            <person name="Berriman M."/>
            <person name="Song J."/>
            <person name="Olsen R."/>
            <person name="Szafranski K."/>
            <person name="Xu Q."/>
            <person name="Tunggal B."/>
            <person name="Kummerfeld S."/>
            <person name="Madera M."/>
            <person name="Konfortov B.A."/>
            <person name="Rivero F."/>
            <person name="Bankier A.T."/>
            <person name="Lehmann R."/>
            <person name="Hamlin N."/>
            <person name="Davies R."/>
            <person name="Gaudet P."/>
            <person name="Fey P."/>
            <person name="Pilcher K."/>
            <person name="Chen G."/>
            <person name="Saunders D."/>
            <person name="Sodergren E.J."/>
            <person name="Davis P."/>
            <person name="Kerhornou A."/>
            <person name="Nie X."/>
            <person name="Hall N."/>
            <person name="Anjard C."/>
            <person name="Hemphill L."/>
            <person name="Bason N."/>
            <person name="Farbrother P."/>
            <person name="Desany B."/>
            <person name="Just E."/>
            <person name="Morio T."/>
            <person name="Rost R."/>
            <person name="Churcher C.M."/>
            <person name="Cooper J."/>
            <person name="Haydock S."/>
            <person name="van Driessche N."/>
            <person name="Cronin A."/>
            <person name="Goodhead I."/>
            <person name="Muzny D.M."/>
            <person name="Mourier T."/>
            <person name="Pain A."/>
            <person name="Lu M."/>
            <person name="Harper D."/>
            <person name="Lindsay R."/>
            <person name="Hauser H."/>
            <person name="James K.D."/>
            <person name="Quiles M."/>
            <person name="Madan Babu M."/>
            <person name="Saito T."/>
            <person name="Buchrieser C."/>
            <person name="Wardroper A."/>
            <person name="Felder M."/>
            <person name="Thangavelu M."/>
            <person name="Johnson D."/>
            <person name="Knights A."/>
            <person name="Loulseged H."/>
            <person name="Mungall K.L."/>
            <person name="Oliver K."/>
            <person name="Price C."/>
            <person name="Quail M.A."/>
            <person name="Urushihara H."/>
            <person name="Hernandez J."/>
            <person name="Rabbinowitsch E."/>
            <person name="Steffen D."/>
            <person name="Sanders M."/>
            <person name="Ma J."/>
            <person name="Kohara Y."/>
            <person name="Sharp S."/>
            <person name="Simmonds M.N."/>
            <person name="Spiegler S."/>
            <person name="Tivey A."/>
            <person name="Sugano S."/>
            <person name="White B."/>
            <person name="Walker D."/>
            <person name="Woodward J.R."/>
            <person name="Winckler T."/>
            <person name="Tanaka Y."/>
            <person name="Shaulsky G."/>
            <person name="Schleicher M."/>
            <person name="Weinstock G.M."/>
            <person name="Rosenthal A."/>
            <person name="Cox E.C."/>
            <person name="Chisholm R.L."/>
            <person name="Gibbs R.A."/>
            <person name="Loomis W.F."/>
            <person name="Platzer M."/>
            <person name="Kay R.R."/>
            <person name="Williams J.G."/>
            <person name="Dear P.H."/>
            <person name="Noegel A.A."/>
            <person name="Barrell B.G."/>
            <person name="Kuspa A."/>
        </authorList>
    </citation>
    <scope>NUCLEOTIDE SEQUENCE [LARGE SCALE GENOMIC DNA]</scope>
    <source>
        <strain>AX4</strain>
    </source>
</reference>
<accession>Q54JW5</accession>
<name>SWET1_DICDI</name>
<organism>
    <name type="scientific">Dictyostelium discoideum</name>
    <name type="common">Social amoeba</name>
    <dbReference type="NCBI Taxonomy" id="44689"/>
    <lineage>
        <taxon>Eukaryota</taxon>
        <taxon>Amoebozoa</taxon>
        <taxon>Evosea</taxon>
        <taxon>Eumycetozoa</taxon>
        <taxon>Dictyostelia</taxon>
        <taxon>Dictyosteliales</taxon>
        <taxon>Dictyosteliaceae</taxon>
        <taxon>Dictyostelium</taxon>
    </lineage>
</organism>
<comment type="function">
    <text evidence="1">Mediates both low-affinity uptake and efflux of sugar across the membrane.</text>
</comment>
<comment type="subcellular location">
    <subcellularLocation>
        <location>Golgi apparatus membrane</location>
        <topology>Multi-pass membrane protein</topology>
    </subcellularLocation>
    <subcellularLocation>
        <location>Cell membrane</location>
        <topology>Multi-pass membrane protein</topology>
    </subcellularLocation>
</comment>
<comment type="similarity">
    <text evidence="3">Belongs to the SWEET sugar transporter family.</text>
</comment>
<gene>
    <name type="primary">slc50a1</name>
    <name type="ORF">DDB_G0287763</name>
</gene>
<evidence type="ECO:0000250" key="1"/>
<evidence type="ECO:0000255" key="2"/>
<evidence type="ECO:0000305" key="3"/>
<feature type="chain" id="PRO_0000345126" description="Sugar transporter SWEET1">
    <location>
        <begin position="1"/>
        <end position="220"/>
    </location>
</feature>
<feature type="transmembrane region" description="Helical; Name=1" evidence="2">
    <location>
        <begin position="9"/>
        <end position="29"/>
    </location>
</feature>
<feature type="transmembrane region" description="Helical; Name=2" evidence="2">
    <location>
        <begin position="44"/>
        <end position="64"/>
    </location>
</feature>
<feature type="transmembrane region" description="Helical; Name=3" evidence="2">
    <location>
        <begin position="70"/>
        <end position="90"/>
    </location>
</feature>
<feature type="transmembrane region" description="Helical; Name=4" evidence="2">
    <location>
        <begin position="106"/>
        <end position="126"/>
    </location>
</feature>
<feature type="transmembrane region" description="Helical; Name=5" evidence="2">
    <location>
        <begin position="138"/>
        <end position="158"/>
    </location>
</feature>
<feature type="transmembrane region" description="Helical; Name=6" evidence="2">
    <location>
        <begin position="167"/>
        <end position="187"/>
    </location>
</feature>
<feature type="transmembrane region" description="Helical; Name=7" evidence="2">
    <location>
        <begin position="191"/>
        <end position="211"/>
    </location>
</feature>
<feature type="domain" description="MtN3/slv 1">
    <location>
        <begin position="12"/>
        <end position="92"/>
    </location>
</feature>
<feature type="domain" description="MtN3/slv 2">
    <location>
        <begin position="134"/>
        <end position="217"/>
    </location>
</feature>
<keyword id="KW-1003">Cell membrane</keyword>
<keyword id="KW-0333">Golgi apparatus</keyword>
<keyword id="KW-0472">Membrane</keyword>
<keyword id="KW-1185">Reference proteome</keyword>
<keyword id="KW-0677">Repeat</keyword>
<keyword id="KW-0762">Sugar transport</keyword>
<keyword id="KW-0812">Transmembrane</keyword>
<keyword id="KW-1133">Transmembrane helix</keyword>
<keyword id="KW-0813">Transport</keyword>
<protein>
    <recommendedName>
        <fullName>Sugar transporter SWEET1</fullName>
    </recommendedName>
</protein>
<proteinExistence type="evidence at transcript level"/>